<comment type="function">
    <text evidence="1">Specifically methylates the N4 position of cytidine in position 1402 (C1402) of 16S rRNA.</text>
</comment>
<comment type="catalytic activity">
    <reaction evidence="1">
        <text>cytidine(1402) in 16S rRNA + S-adenosyl-L-methionine = N(4)-methylcytidine(1402) in 16S rRNA + S-adenosyl-L-homocysteine + H(+)</text>
        <dbReference type="Rhea" id="RHEA:42928"/>
        <dbReference type="Rhea" id="RHEA-COMP:10286"/>
        <dbReference type="Rhea" id="RHEA-COMP:10287"/>
        <dbReference type="ChEBI" id="CHEBI:15378"/>
        <dbReference type="ChEBI" id="CHEBI:57856"/>
        <dbReference type="ChEBI" id="CHEBI:59789"/>
        <dbReference type="ChEBI" id="CHEBI:74506"/>
        <dbReference type="ChEBI" id="CHEBI:82748"/>
        <dbReference type="EC" id="2.1.1.199"/>
    </reaction>
</comment>
<comment type="subcellular location">
    <subcellularLocation>
        <location evidence="1">Cytoplasm</location>
    </subcellularLocation>
</comment>
<comment type="similarity">
    <text evidence="1">Belongs to the methyltransferase superfamily. RsmH family.</text>
</comment>
<accession>Q7N139</accession>
<proteinExistence type="inferred from homology"/>
<sequence>MANSHFKHTSVLLDEAVNGLNIRENGIYIDGTFGRGGHSRLILSQLGTEGRLIAIDRDPQAIEVAKAITDPRFSIVHGPFSKLAHYTEKAGLIGKIDGVLLDLGVSSPQLDDPERGFSFMRDGPLDMRMDPTRGQSAAEWLMNATADDIAWVLKTFGEERFAKRIARAIVACNQEEPITRTKALADLIAQASPIKEKHKHPATKSFQAIRIYINSELEEIEQALEGALQVLAPQGRLSVISFHSLEDRIVKRFIRQNSRGPQVPAGLPLTEEQLKARGGRSLKSIGKMKPSEEEVADNPRARSSVLRFAEKVSE</sequence>
<gene>
    <name evidence="1" type="primary">rsmH</name>
    <name type="synonym">mraW</name>
    <name type="ordered locus">plu3662</name>
</gene>
<reference key="1">
    <citation type="journal article" date="2003" name="Nat. Biotechnol.">
        <title>The genome sequence of the entomopathogenic bacterium Photorhabdus luminescens.</title>
        <authorList>
            <person name="Duchaud E."/>
            <person name="Rusniok C."/>
            <person name="Frangeul L."/>
            <person name="Buchrieser C."/>
            <person name="Givaudan A."/>
            <person name="Taourit S."/>
            <person name="Bocs S."/>
            <person name="Boursaux-Eude C."/>
            <person name="Chandler M."/>
            <person name="Charles J.-F."/>
            <person name="Dassa E."/>
            <person name="Derose R."/>
            <person name="Derzelle S."/>
            <person name="Freyssinet G."/>
            <person name="Gaudriault S."/>
            <person name="Medigue C."/>
            <person name="Lanois A."/>
            <person name="Powell K."/>
            <person name="Siguier P."/>
            <person name="Vincent R."/>
            <person name="Wingate V."/>
            <person name="Zouine M."/>
            <person name="Glaser P."/>
            <person name="Boemare N."/>
            <person name="Danchin A."/>
            <person name="Kunst F."/>
        </authorList>
    </citation>
    <scope>NUCLEOTIDE SEQUENCE [LARGE SCALE GENOMIC DNA]</scope>
    <source>
        <strain>DSM 15139 / CIP 105565 / TT01</strain>
    </source>
</reference>
<keyword id="KW-0963">Cytoplasm</keyword>
<keyword id="KW-0489">Methyltransferase</keyword>
<keyword id="KW-1185">Reference proteome</keyword>
<keyword id="KW-0698">rRNA processing</keyword>
<keyword id="KW-0949">S-adenosyl-L-methionine</keyword>
<keyword id="KW-0808">Transferase</keyword>
<evidence type="ECO:0000255" key="1">
    <source>
        <dbReference type="HAMAP-Rule" id="MF_01007"/>
    </source>
</evidence>
<evidence type="ECO:0000256" key="2">
    <source>
        <dbReference type="SAM" id="MobiDB-lite"/>
    </source>
</evidence>
<organism>
    <name type="scientific">Photorhabdus laumondii subsp. laumondii (strain DSM 15139 / CIP 105565 / TT01)</name>
    <name type="common">Photorhabdus luminescens subsp. laumondii</name>
    <dbReference type="NCBI Taxonomy" id="243265"/>
    <lineage>
        <taxon>Bacteria</taxon>
        <taxon>Pseudomonadati</taxon>
        <taxon>Pseudomonadota</taxon>
        <taxon>Gammaproteobacteria</taxon>
        <taxon>Enterobacterales</taxon>
        <taxon>Morganellaceae</taxon>
        <taxon>Photorhabdus</taxon>
    </lineage>
</organism>
<protein>
    <recommendedName>
        <fullName evidence="1">Ribosomal RNA small subunit methyltransferase H</fullName>
        <ecNumber evidence="1">2.1.1.199</ecNumber>
    </recommendedName>
    <alternativeName>
        <fullName evidence="1">16S rRNA m(4)C1402 methyltransferase</fullName>
    </alternativeName>
    <alternativeName>
        <fullName evidence="1">rRNA (cytosine-N(4)-)-methyltransferase RsmH</fullName>
    </alternativeName>
</protein>
<dbReference type="EC" id="2.1.1.199" evidence="1"/>
<dbReference type="EMBL" id="BX571871">
    <property type="protein sequence ID" value="CAE16035.1"/>
    <property type="molecule type" value="Genomic_DNA"/>
</dbReference>
<dbReference type="RefSeq" id="WP_011147825.1">
    <property type="nucleotide sequence ID" value="NC_005126.1"/>
</dbReference>
<dbReference type="SMR" id="Q7N139"/>
<dbReference type="STRING" id="243265.plu3662"/>
<dbReference type="GeneID" id="48849905"/>
<dbReference type="KEGG" id="plu:plu3662"/>
<dbReference type="eggNOG" id="COG0275">
    <property type="taxonomic scope" value="Bacteria"/>
</dbReference>
<dbReference type="HOGENOM" id="CLU_038422_2_0_6"/>
<dbReference type="OrthoDB" id="9806637at2"/>
<dbReference type="Proteomes" id="UP000002514">
    <property type="component" value="Chromosome"/>
</dbReference>
<dbReference type="GO" id="GO:0005737">
    <property type="term" value="C:cytoplasm"/>
    <property type="evidence" value="ECO:0007669"/>
    <property type="project" value="UniProtKB-SubCell"/>
</dbReference>
<dbReference type="GO" id="GO:0071424">
    <property type="term" value="F:rRNA (cytosine-N4-)-methyltransferase activity"/>
    <property type="evidence" value="ECO:0007669"/>
    <property type="project" value="UniProtKB-UniRule"/>
</dbReference>
<dbReference type="GO" id="GO:0070475">
    <property type="term" value="P:rRNA base methylation"/>
    <property type="evidence" value="ECO:0007669"/>
    <property type="project" value="UniProtKB-UniRule"/>
</dbReference>
<dbReference type="FunFam" id="1.10.150.170:FF:000001">
    <property type="entry name" value="Ribosomal RNA small subunit methyltransferase H"/>
    <property type="match status" value="1"/>
</dbReference>
<dbReference type="Gene3D" id="1.10.150.170">
    <property type="entry name" value="Putative methyltransferase TM0872, insert domain"/>
    <property type="match status" value="1"/>
</dbReference>
<dbReference type="Gene3D" id="3.40.50.150">
    <property type="entry name" value="Vaccinia Virus protein VP39"/>
    <property type="match status" value="1"/>
</dbReference>
<dbReference type="HAMAP" id="MF_01007">
    <property type="entry name" value="16SrRNA_methyltr_H"/>
    <property type="match status" value="1"/>
</dbReference>
<dbReference type="InterPro" id="IPR002903">
    <property type="entry name" value="RsmH"/>
</dbReference>
<dbReference type="InterPro" id="IPR023397">
    <property type="entry name" value="SAM-dep_MeTrfase_MraW_recog"/>
</dbReference>
<dbReference type="InterPro" id="IPR029063">
    <property type="entry name" value="SAM-dependent_MTases_sf"/>
</dbReference>
<dbReference type="NCBIfam" id="TIGR00006">
    <property type="entry name" value="16S rRNA (cytosine(1402)-N(4))-methyltransferase RsmH"/>
    <property type="match status" value="1"/>
</dbReference>
<dbReference type="PANTHER" id="PTHR11265:SF0">
    <property type="entry name" value="12S RRNA N4-METHYLCYTIDINE METHYLTRANSFERASE"/>
    <property type="match status" value="1"/>
</dbReference>
<dbReference type="PANTHER" id="PTHR11265">
    <property type="entry name" value="S-ADENOSYL-METHYLTRANSFERASE MRAW"/>
    <property type="match status" value="1"/>
</dbReference>
<dbReference type="Pfam" id="PF01795">
    <property type="entry name" value="Methyltransf_5"/>
    <property type="match status" value="1"/>
</dbReference>
<dbReference type="PIRSF" id="PIRSF004486">
    <property type="entry name" value="MraW"/>
    <property type="match status" value="1"/>
</dbReference>
<dbReference type="SUPFAM" id="SSF81799">
    <property type="entry name" value="Putative methyltransferase TM0872, insert domain"/>
    <property type="match status" value="1"/>
</dbReference>
<dbReference type="SUPFAM" id="SSF53335">
    <property type="entry name" value="S-adenosyl-L-methionine-dependent methyltransferases"/>
    <property type="match status" value="1"/>
</dbReference>
<name>RSMH_PHOLL</name>
<feature type="chain" id="PRO_0000108678" description="Ribosomal RNA small subunit methyltransferase H">
    <location>
        <begin position="1"/>
        <end position="314"/>
    </location>
</feature>
<feature type="region of interest" description="Disordered" evidence="2">
    <location>
        <begin position="278"/>
        <end position="300"/>
    </location>
</feature>
<feature type="compositionally biased region" description="Basic and acidic residues" evidence="2">
    <location>
        <begin position="289"/>
        <end position="300"/>
    </location>
</feature>
<feature type="binding site" evidence="1">
    <location>
        <begin position="36"/>
        <end position="38"/>
    </location>
    <ligand>
        <name>S-adenosyl-L-methionine</name>
        <dbReference type="ChEBI" id="CHEBI:59789"/>
    </ligand>
</feature>
<feature type="binding site" evidence="1">
    <location>
        <position position="56"/>
    </location>
    <ligand>
        <name>S-adenosyl-L-methionine</name>
        <dbReference type="ChEBI" id="CHEBI:59789"/>
    </ligand>
</feature>
<feature type="binding site" evidence="1">
    <location>
        <position position="80"/>
    </location>
    <ligand>
        <name>S-adenosyl-L-methionine</name>
        <dbReference type="ChEBI" id="CHEBI:59789"/>
    </ligand>
</feature>
<feature type="binding site" evidence="1">
    <location>
        <position position="102"/>
    </location>
    <ligand>
        <name>S-adenosyl-L-methionine</name>
        <dbReference type="ChEBI" id="CHEBI:59789"/>
    </ligand>
</feature>
<feature type="binding site" evidence="1">
    <location>
        <position position="109"/>
    </location>
    <ligand>
        <name>S-adenosyl-L-methionine</name>
        <dbReference type="ChEBI" id="CHEBI:59789"/>
    </ligand>
</feature>